<proteinExistence type="evidence at protein level"/>
<feature type="peptide" id="PRO_0000434818" description="Potassium channel toxin alpha-KTx 31.1" evidence="3">
    <location>
        <begin position="1"/>
        <end position="39"/>
    </location>
</feature>
<feature type="site" description="Basic residue of the functional dyad" evidence="1">
    <location>
        <position position="29"/>
    </location>
</feature>
<feature type="disulfide bond" evidence="2">
    <location>
        <begin position="7"/>
        <end position="30"/>
    </location>
</feature>
<feature type="disulfide bond" evidence="2">
    <location>
        <begin position="13"/>
        <end position="35"/>
    </location>
</feature>
<feature type="disulfide bond" evidence="2">
    <location>
        <begin position="17"/>
        <end position="37"/>
    </location>
</feature>
<reference key="1">
    <citation type="journal article" date="2016" name="Peptides">
        <title>Kbot55, purified from Buthus occitanus tunetanus venom, represents the first member of a novel alpha-KTx subfamily.</title>
        <authorList>
            <person name="ElFessi-Magouri R."/>
            <person name="Peigneur S."/>
            <person name="Khamessi O."/>
            <person name="Srairi-Abid N."/>
            <person name="ElAyeb M."/>
            <person name="Mille B.G."/>
            <person name="Cuypers E."/>
            <person name="Tytgat J."/>
            <person name="Kharrat R."/>
        </authorList>
    </citation>
    <scope>PROTEIN SEQUENCE</scope>
    <scope>FUNCTION</scope>
    <scope>SUBCELLULAR LOCATION</scope>
    <scope>MASS SPECTROMETRY</scope>
    <scope>TOXIC DOSE</scope>
    <source>
        <tissue>Venom</tissue>
    </source>
</reference>
<organism>
    <name type="scientific">Buthus occitanus tunetanus</name>
    <name type="common">Common European scorpion</name>
    <name type="synonym">Buthus tunetanus</name>
    <dbReference type="NCBI Taxonomy" id="6871"/>
    <lineage>
        <taxon>Eukaryota</taxon>
        <taxon>Metazoa</taxon>
        <taxon>Ecdysozoa</taxon>
        <taxon>Arthropoda</taxon>
        <taxon>Chelicerata</taxon>
        <taxon>Arachnida</taxon>
        <taxon>Scorpiones</taxon>
        <taxon>Buthida</taxon>
        <taxon>Buthoidea</taxon>
        <taxon>Buthidae</taxon>
        <taxon>Buthus</taxon>
    </lineage>
</organism>
<protein>
    <recommendedName>
        <fullName evidence="4">Potassium channel toxin alpha-KTx 31.1</fullName>
    </recommendedName>
    <alternativeName>
        <fullName evidence="4">Kbot55</fullName>
    </alternativeName>
</protein>
<name>KA311_BUTOC</name>
<accession>P0DL62</accession>
<comment type="function">
    <text evidence="3">Voltage-gated potassium channel inhibitor. 1 uM of the native toxin inhibits rat Kv1.2/KCNA2 (100% inhibition), and drosophila Shaker IR/Sh (100%), human Kv1.3/KCNA3 (83%), rat Kv1.1/KCNA1 (32%) and rat Kv1.6/KCNA6 (21%).</text>
</comment>
<comment type="subcellular location">
    <subcellularLocation>
        <location evidence="3">Secreted</location>
    </subcellularLocation>
</comment>
<comment type="tissue specificity">
    <text evidence="6">Expressed by the venom gland.</text>
</comment>
<comment type="domain">
    <text evidence="5">Has the structural arrangement of an alpha-helix connected to antiparallel beta-sheets by disulfide bonds (CS-alpha/beta).</text>
</comment>
<comment type="mass spectrometry" mass="4128.65" method="MALDI" evidence="3">
    <text>Average mass.</text>
</comment>
<comment type="toxic dose">
    <text>LD(50) is below 5 ug/kg by intracerebroventricular injection into mice. A rapid paralysis in the lower half of the body was observed a few minutes after the injection and after 10 minutes the animals died.</text>
</comment>
<comment type="miscellaneous">
    <text evidence="3">Negative results: does not inhibit rKv1.4/KCNA4 and the sodium channel rNav1.4/SCN4A.</text>
</comment>
<comment type="similarity">
    <text>Belongs to the short scorpion toxin superfamily. Potassium channel inhibitor family. Alpha-KTx 31 subfamily.</text>
</comment>
<evidence type="ECO:0000250" key="1"/>
<evidence type="ECO:0000250" key="2">
    <source>
        <dbReference type="UniProtKB" id="P13487"/>
    </source>
</evidence>
<evidence type="ECO:0000269" key="3">
    <source>
    </source>
</evidence>
<evidence type="ECO:0000303" key="4">
    <source>
    </source>
</evidence>
<evidence type="ECO:0000305" key="5"/>
<evidence type="ECO:0000305" key="6">
    <source>
    </source>
</evidence>
<sequence length="39" mass="4129">AGSMDSCSETGVCMKACSERIRQVENDNKCPAGECICTT</sequence>
<keyword id="KW-0903">Direct protein sequencing</keyword>
<keyword id="KW-1015">Disulfide bond</keyword>
<keyword id="KW-0872">Ion channel impairing toxin</keyword>
<keyword id="KW-0632">Potassium channel impairing toxin</keyword>
<keyword id="KW-0964">Secreted</keyword>
<keyword id="KW-0800">Toxin</keyword>
<keyword id="KW-1220">Voltage-gated potassium channel impairing toxin</keyword>
<dbReference type="SMR" id="P0DL62"/>
<dbReference type="GO" id="GO:0005576">
    <property type="term" value="C:extracellular region"/>
    <property type="evidence" value="ECO:0007669"/>
    <property type="project" value="UniProtKB-SubCell"/>
</dbReference>
<dbReference type="GO" id="GO:0015459">
    <property type="term" value="F:potassium channel regulator activity"/>
    <property type="evidence" value="ECO:0007669"/>
    <property type="project" value="UniProtKB-KW"/>
</dbReference>
<dbReference type="GO" id="GO:0090729">
    <property type="term" value="F:toxin activity"/>
    <property type="evidence" value="ECO:0007669"/>
    <property type="project" value="UniProtKB-KW"/>
</dbReference>